<keyword id="KW-0438">Lignin biosynthesis</keyword>
<keyword id="KW-0479">Metal-binding</keyword>
<keyword id="KW-0521">NADP</keyword>
<keyword id="KW-0560">Oxidoreductase</keyword>
<keyword id="KW-0862">Zinc</keyword>
<protein>
    <recommendedName>
        <fullName>Probable cinnamyl alcohol dehydrogenase</fullName>
        <shortName>CAD</shortName>
        <ecNumber evidence="1">1.1.1.195</ecNumber>
    </recommendedName>
</protein>
<comment type="function">
    <text evidence="1">Involved in lignin biosynthesis. Catalyzes the final step specific for the production of lignin monomers. Catalyzes the NADPH-dependent reduction of coniferaldehyde, 5-hydroxyconiferaldehyde, sinapaldehyde, 4-coumaraldehyde and caffeyl aldehyde to their respective alcohols.</text>
</comment>
<comment type="catalytic activity">
    <reaction evidence="1">
        <text>(E)-cinnamyl alcohol + NADP(+) = (E)-cinnamaldehyde + NADPH + H(+)</text>
        <dbReference type="Rhea" id="RHEA:10392"/>
        <dbReference type="ChEBI" id="CHEBI:15378"/>
        <dbReference type="ChEBI" id="CHEBI:16731"/>
        <dbReference type="ChEBI" id="CHEBI:33227"/>
        <dbReference type="ChEBI" id="CHEBI:57783"/>
        <dbReference type="ChEBI" id="CHEBI:58349"/>
        <dbReference type="EC" id="1.1.1.195"/>
    </reaction>
    <physiologicalReaction direction="right-to-left" evidence="1">
        <dbReference type="Rhea" id="RHEA:10394"/>
    </physiologicalReaction>
</comment>
<comment type="catalytic activity">
    <reaction evidence="1">
        <text>(E)-coniferol + NADP(+) = (E)-coniferaldehyde + NADPH + H(+)</text>
        <dbReference type="Rhea" id="RHEA:22444"/>
        <dbReference type="ChEBI" id="CHEBI:15378"/>
        <dbReference type="ChEBI" id="CHEBI:16547"/>
        <dbReference type="ChEBI" id="CHEBI:17745"/>
        <dbReference type="ChEBI" id="CHEBI:57783"/>
        <dbReference type="ChEBI" id="CHEBI:58349"/>
        <dbReference type="EC" id="1.1.1.195"/>
    </reaction>
    <physiologicalReaction direction="right-to-left" evidence="1">
        <dbReference type="Rhea" id="RHEA:22446"/>
    </physiologicalReaction>
</comment>
<comment type="catalytic activity">
    <reaction evidence="1">
        <text>(E)-sinapyl alcohol + NADP(+) = (E)-sinapaldehyde + NADPH + H(+)</text>
        <dbReference type="Rhea" id="RHEA:45704"/>
        <dbReference type="ChEBI" id="CHEBI:15378"/>
        <dbReference type="ChEBI" id="CHEBI:27949"/>
        <dbReference type="ChEBI" id="CHEBI:57783"/>
        <dbReference type="ChEBI" id="CHEBI:58349"/>
        <dbReference type="ChEBI" id="CHEBI:64557"/>
        <dbReference type="EC" id="1.1.1.195"/>
    </reaction>
    <physiologicalReaction direction="right-to-left" evidence="1">
        <dbReference type="Rhea" id="RHEA:45706"/>
    </physiologicalReaction>
</comment>
<comment type="catalytic activity">
    <reaction evidence="1">
        <text>(E)-4-coumaroyl alcohol + NADP(+) = (E)-4-coumaraldehyde + NADPH + H(+)</text>
        <dbReference type="Rhea" id="RHEA:45724"/>
        <dbReference type="ChEBI" id="CHEBI:15378"/>
        <dbReference type="ChEBI" id="CHEBI:28353"/>
        <dbReference type="ChEBI" id="CHEBI:57783"/>
        <dbReference type="ChEBI" id="CHEBI:58349"/>
        <dbReference type="ChEBI" id="CHEBI:64555"/>
        <dbReference type="EC" id="1.1.1.195"/>
    </reaction>
    <physiologicalReaction direction="right-to-left" evidence="1">
        <dbReference type="Rhea" id="RHEA:45726"/>
    </physiologicalReaction>
</comment>
<comment type="catalytic activity">
    <reaction evidence="1">
        <text>(E)-caffeyl alcohol + NADP(+) = (E)-caffeyl aldehyde + NADPH + H(+)</text>
        <dbReference type="Rhea" id="RHEA:45728"/>
        <dbReference type="ChEBI" id="CHEBI:15378"/>
        <dbReference type="ChEBI" id="CHEBI:28323"/>
        <dbReference type="ChEBI" id="CHEBI:31334"/>
        <dbReference type="ChEBI" id="CHEBI:57783"/>
        <dbReference type="ChEBI" id="CHEBI:58349"/>
    </reaction>
    <physiologicalReaction direction="right-to-left" evidence="1">
        <dbReference type="Rhea" id="RHEA:45730"/>
    </physiologicalReaction>
</comment>
<comment type="cofactor">
    <cofactor evidence="1">
        <name>Zn(2+)</name>
        <dbReference type="ChEBI" id="CHEBI:29105"/>
    </cofactor>
    <text evidence="1">Binds 2 Zn(2+) ions per subunit.</text>
</comment>
<comment type="pathway">
    <text evidence="1">Aromatic compound metabolism; phenylpropanoid biosynthesis.</text>
</comment>
<comment type="subunit">
    <text evidence="1">Homodimer.</text>
</comment>
<comment type="similarity">
    <text evidence="2">Belongs to the zinc-containing alcohol dehydrogenase family.</text>
</comment>
<feature type="chain" id="PRO_0000160793" description="Probable cinnamyl alcohol dehydrogenase">
    <location>
        <begin position="1"/>
        <end position="356"/>
    </location>
</feature>
<feature type="binding site" evidence="1">
    <location>
        <position position="47"/>
    </location>
    <ligand>
        <name>Zn(2+)</name>
        <dbReference type="ChEBI" id="CHEBI:29105"/>
        <label>1</label>
        <note>catalytic</note>
    </ligand>
</feature>
<feature type="binding site" evidence="1">
    <location>
        <position position="49"/>
    </location>
    <ligand>
        <name>NADP(+)</name>
        <dbReference type="ChEBI" id="CHEBI:58349"/>
    </ligand>
</feature>
<feature type="binding site" evidence="1">
    <location>
        <position position="69"/>
    </location>
    <ligand>
        <name>Zn(2+)</name>
        <dbReference type="ChEBI" id="CHEBI:29105"/>
        <label>1</label>
        <note>catalytic</note>
    </ligand>
</feature>
<feature type="binding site" evidence="1">
    <location>
        <position position="70"/>
    </location>
    <ligand>
        <name>Zn(2+)</name>
        <dbReference type="ChEBI" id="CHEBI:29105"/>
        <label>1</label>
        <note>catalytic</note>
    </ligand>
</feature>
<feature type="binding site" evidence="1">
    <location>
        <position position="100"/>
    </location>
    <ligand>
        <name>Zn(2+)</name>
        <dbReference type="ChEBI" id="CHEBI:29105"/>
        <label>2</label>
    </ligand>
</feature>
<feature type="binding site" evidence="1">
    <location>
        <position position="103"/>
    </location>
    <ligand>
        <name>Zn(2+)</name>
        <dbReference type="ChEBI" id="CHEBI:29105"/>
        <label>2</label>
    </ligand>
</feature>
<feature type="binding site" evidence="1">
    <location>
        <position position="106"/>
    </location>
    <ligand>
        <name>Zn(2+)</name>
        <dbReference type="ChEBI" id="CHEBI:29105"/>
        <label>2</label>
    </ligand>
</feature>
<feature type="binding site" evidence="1">
    <location>
        <position position="114"/>
    </location>
    <ligand>
        <name>Zn(2+)</name>
        <dbReference type="ChEBI" id="CHEBI:29105"/>
        <label>2</label>
    </ligand>
</feature>
<feature type="binding site" evidence="1">
    <location>
        <position position="163"/>
    </location>
    <ligand>
        <name>Zn(2+)</name>
        <dbReference type="ChEBI" id="CHEBI:29105"/>
        <label>1</label>
        <note>catalytic</note>
    </ligand>
</feature>
<feature type="binding site" evidence="1">
    <location>
        <position position="167"/>
    </location>
    <ligand>
        <name>NADP(+)</name>
        <dbReference type="ChEBI" id="CHEBI:58349"/>
    </ligand>
</feature>
<feature type="binding site" evidence="1">
    <location>
        <begin position="188"/>
        <end position="193"/>
    </location>
    <ligand>
        <name>NADP(+)</name>
        <dbReference type="ChEBI" id="CHEBI:58349"/>
    </ligand>
</feature>
<feature type="binding site" evidence="1">
    <location>
        <begin position="211"/>
        <end position="216"/>
    </location>
    <ligand>
        <name>NADP(+)</name>
        <dbReference type="ChEBI" id="CHEBI:58349"/>
    </ligand>
</feature>
<feature type="binding site" evidence="1">
    <location>
        <position position="251"/>
    </location>
    <ligand>
        <name>NADP(+)</name>
        <dbReference type="ChEBI" id="CHEBI:58349"/>
    </ligand>
</feature>
<feature type="binding site" evidence="1">
    <location>
        <position position="275"/>
    </location>
    <ligand>
        <name>NADP(+)</name>
        <dbReference type="ChEBI" id="CHEBI:58349"/>
    </ligand>
</feature>
<feature type="binding site" evidence="1">
    <location>
        <begin position="298"/>
        <end position="300"/>
    </location>
    <ligand>
        <name>NADP(+)</name>
        <dbReference type="ChEBI" id="CHEBI:58349"/>
    </ligand>
</feature>
<gene>
    <name type="primary">CAD</name>
</gene>
<reference key="1">
    <citation type="online journal article" date="1998" name="Plant Gene Register">
        <title>Nucleotide sequence of a Eucalyptus globulus cDNA clone encoding cinnamyl alcohol dehydrogenase.</title>
        <authorList>
            <person name="de Melis L.E."/>
            <person name="Brugliera F."/>
            <person name="Pongracic S."/>
            <person name="Stevenson T.W."/>
        </authorList>
        <locator>PGR98-032</locator>
    </citation>
    <scope>NUCLEOTIDE SEQUENCE [MRNA]</scope>
    <source>
        <tissue>Stem</tissue>
    </source>
</reference>
<name>CADH_EUCGL</name>
<dbReference type="EC" id="1.1.1.195" evidence="1"/>
<dbReference type="EMBL" id="AF038561">
    <property type="protein sequence ID" value="AAC07987.1"/>
    <property type="molecule type" value="mRNA"/>
</dbReference>
<dbReference type="SMR" id="O64969"/>
<dbReference type="UniPathway" id="UPA00711"/>
<dbReference type="GO" id="GO:0045551">
    <property type="term" value="F:cinnamyl-alcohol dehydrogenase activity"/>
    <property type="evidence" value="ECO:0007669"/>
    <property type="project" value="UniProtKB-EC"/>
</dbReference>
<dbReference type="GO" id="GO:0050268">
    <property type="term" value="F:coniferyl-alcohol dehydrogenase activity"/>
    <property type="evidence" value="ECO:0007669"/>
    <property type="project" value="RHEA"/>
</dbReference>
<dbReference type="GO" id="GO:0008270">
    <property type="term" value="F:zinc ion binding"/>
    <property type="evidence" value="ECO:0007669"/>
    <property type="project" value="InterPro"/>
</dbReference>
<dbReference type="GO" id="GO:0009809">
    <property type="term" value="P:lignin biosynthetic process"/>
    <property type="evidence" value="ECO:0007669"/>
    <property type="project" value="UniProtKB-KW"/>
</dbReference>
<dbReference type="CDD" id="cd05283">
    <property type="entry name" value="CAD1"/>
    <property type="match status" value="1"/>
</dbReference>
<dbReference type="FunFam" id="3.40.50.720:FF:000022">
    <property type="entry name" value="Cinnamyl alcohol dehydrogenase"/>
    <property type="match status" value="1"/>
</dbReference>
<dbReference type="FunFam" id="3.90.180.10:FF:000004">
    <property type="entry name" value="probable cinnamyl alcohol dehydrogenase"/>
    <property type="match status" value="1"/>
</dbReference>
<dbReference type="FunFam" id="3.90.180.10:FF:000100">
    <property type="entry name" value="Putative cinnamyl alcohol dehydrogenase 6"/>
    <property type="match status" value="1"/>
</dbReference>
<dbReference type="Gene3D" id="3.90.180.10">
    <property type="entry name" value="Medium-chain alcohol dehydrogenases, catalytic domain"/>
    <property type="match status" value="1"/>
</dbReference>
<dbReference type="Gene3D" id="3.40.50.720">
    <property type="entry name" value="NAD(P)-binding Rossmann-like Domain"/>
    <property type="match status" value="1"/>
</dbReference>
<dbReference type="InterPro" id="IPR013149">
    <property type="entry name" value="ADH-like_C"/>
</dbReference>
<dbReference type="InterPro" id="IPR013154">
    <property type="entry name" value="ADH-like_N"/>
</dbReference>
<dbReference type="InterPro" id="IPR002328">
    <property type="entry name" value="ADH_Zn_CS"/>
</dbReference>
<dbReference type="InterPro" id="IPR047109">
    <property type="entry name" value="CAD-like"/>
</dbReference>
<dbReference type="InterPro" id="IPR011032">
    <property type="entry name" value="GroES-like_sf"/>
</dbReference>
<dbReference type="InterPro" id="IPR036291">
    <property type="entry name" value="NAD(P)-bd_dom_sf"/>
</dbReference>
<dbReference type="InterPro" id="IPR020843">
    <property type="entry name" value="PKS_ER"/>
</dbReference>
<dbReference type="PANTHER" id="PTHR42683">
    <property type="entry name" value="ALDEHYDE REDUCTASE"/>
    <property type="match status" value="1"/>
</dbReference>
<dbReference type="Pfam" id="PF08240">
    <property type="entry name" value="ADH_N"/>
    <property type="match status" value="1"/>
</dbReference>
<dbReference type="Pfam" id="PF00107">
    <property type="entry name" value="ADH_zinc_N"/>
    <property type="match status" value="1"/>
</dbReference>
<dbReference type="SMART" id="SM00829">
    <property type="entry name" value="PKS_ER"/>
    <property type="match status" value="1"/>
</dbReference>
<dbReference type="SUPFAM" id="SSF50129">
    <property type="entry name" value="GroES-like"/>
    <property type="match status" value="1"/>
</dbReference>
<dbReference type="SUPFAM" id="SSF51735">
    <property type="entry name" value="NAD(P)-binding Rossmann-fold domains"/>
    <property type="match status" value="1"/>
</dbReference>
<dbReference type="PROSITE" id="PS00059">
    <property type="entry name" value="ADH_ZINC"/>
    <property type="match status" value="1"/>
</dbReference>
<organism>
    <name type="scientific">Eucalyptus globulus</name>
    <name type="common">Tasmanian blue gum</name>
    <dbReference type="NCBI Taxonomy" id="34317"/>
    <lineage>
        <taxon>Eukaryota</taxon>
        <taxon>Viridiplantae</taxon>
        <taxon>Streptophyta</taxon>
        <taxon>Embryophyta</taxon>
        <taxon>Tracheophyta</taxon>
        <taxon>Spermatophyta</taxon>
        <taxon>Magnoliopsida</taxon>
        <taxon>eudicotyledons</taxon>
        <taxon>Gunneridae</taxon>
        <taxon>Pentapetalae</taxon>
        <taxon>rosids</taxon>
        <taxon>malvids</taxon>
        <taxon>Myrtales</taxon>
        <taxon>Myrtaceae</taxon>
        <taxon>Myrtoideae</taxon>
        <taxon>Eucalypteae</taxon>
        <taxon>Eucalyptus</taxon>
    </lineage>
</organism>
<proteinExistence type="evidence at transcript level"/>
<sequence length="356" mass="38806">MGSLEKERTTTGWAARDPSGVLSPYTYSLRNTGPEDLYIKVLSCGICHSDIHQIKNDLGMSHYPMVPGHEVVGEVLEVGSEVTKYRVGDRVGTGIVVGCCRSCSPCNSDQEQYCNKKIWNYNDVYTDGKPTQGGFAGEIVVGERFVVKIPDGLESEQAAPLMCAGVTVYSPLVRFGLKQSGLRGGILGLGGVGHMGVKIAKAMGHHVTVISSSDKKRTEALEHLGADAYLVSSDENGMKEATDSLDYIFDTIPVVHPLEPYLALLKLDGKLILTGVINAPLQFISPMVMLGRKSITGSFIGSMKETEEMLEFCKEKGLTSQIEVIKMDYVNTALERLEKNDVRYRFVVDVVGSKLD</sequence>
<accession>O64969</accession>
<evidence type="ECO:0000250" key="1">
    <source>
        <dbReference type="UniProtKB" id="O49482"/>
    </source>
</evidence>
<evidence type="ECO:0000305" key="2"/>